<evidence type="ECO:0000255" key="1">
    <source>
        <dbReference type="HAMAP-Rule" id="MF_00275"/>
    </source>
</evidence>
<evidence type="ECO:0000305" key="2"/>
<proteinExistence type="evidence at transcript level"/>
<gene>
    <name evidence="1" type="primary">kdpA</name>
    <name type="ordered locus">CA_C3682</name>
</gene>
<organism>
    <name type="scientific">Clostridium acetobutylicum (strain ATCC 824 / DSM 792 / JCM 1419 / IAM 19013 / LMG 5710 / NBRC 13948 / NRRL B-527 / VKM B-1787 / 2291 / W)</name>
    <dbReference type="NCBI Taxonomy" id="272562"/>
    <lineage>
        <taxon>Bacteria</taxon>
        <taxon>Bacillati</taxon>
        <taxon>Bacillota</taxon>
        <taxon>Clostridia</taxon>
        <taxon>Eubacteriales</taxon>
        <taxon>Clostridiaceae</taxon>
        <taxon>Clostridium</taxon>
    </lineage>
</organism>
<sequence length="557" mass="59790">MEILQIAIILIVFVLLCIPIGRYMYKVSEHKKTLLDPVLDKIDGFIYKLSGIQKEEEMNWKQYIFALLMCNAVPAIIGYIILRIQAVGIFNPNHVKGMEQGLTFNTIISFLTNTNLQDYAGETGASYLSQMIVITFFMFFAAATGIAVALAFIRALSGKKKLGNFYVDLVRITTRILLPLSIIVAIFYIGQGVPQTLSANKTVTTIEGKLQNIPLGPVASLEAIKLIGTNGGGFFSANSSHPFENPTPLTNSVQIITLLLLAGSMVVCFGHMIKKKKQAVAIFAAMMVLLLAGAAICFSAEKAGNPALSRIGLSQSMGNLEGKEERFGIAGSSLFTTVTTDTSCGAVNNMHDSLTPIGGAVPLINMMLNVIFGGVGVGFMNMIMYAILTVFLCGLMVGRTPEFLNKKIEGKEIKLVAFAIIVHPFLILMSSALALTTKQGLAGISNPGFHGLTQVLYQFTSSAANNGSGFEGLIDNTMFWNVSAGVVMFLGRYLSIIILLAVASSFAAKRAVPATQGTFKTDNTIFTVTLIVIIVIIGALTFLPAVALGPISEYLTL</sequence>
<reference key="1">
    <citation type="journal article" date="1997" name="J. Bacteriol.">
        <title>The kdp system of Clostridium acetobutylicum: cloning, sequencing, and transcriptional regulation in response to potassium concentration.</title>
        <authorList>
            <person name="Treuner-Lange A."/>
            <person name="Kuhn A."/>
            <person name="Duerre P."/>
        </authorList>
    </citation>
    <scope>NUCLEOTIDE SEQUENCE [GENOMIC DNA]</scope>
    <source>
        <strain>ATCC 824 / DSM 792 / JCM 1419 / IAM 19013 / LMG 5710 / NBRC 13948 / NRRL B-527 / VKM B-1787 / 2291 / W</strain>
    </source>
</reference>
<reference key="2">
    <citation type="journal article" date="2001" name="J. Bacteriol.">
        <title>Genome sequence and comparative analysis of the solvent-producing bacterium Clostridium acetobutylicum.</title>
        <authorList>
            <person name="Noelling J."/>
            <person name="Breton G."/>
            <person name="Omelchenko M.V."/>
            <person name="Makarova K.S."/>
            <person name="Zeng Q."/>
            <person name="Gibson R."/>
            <person name="Lee H.M."/>
            <person name="Dubois J."/>
            <person name="Qiu D."/>
            <person name="Hitti J."/>
            <person name="Wolf Y.I."/>
            <person name="Tatusov R.L."/>
            <person name="Sabathe F."/>
            <person name="Doucette-Stamm L.A."/>
            <person name="Soucaille P."/>
            <person name="Daly M.J."/>
            <person name="Bennett G.N."/>
            <person name="Koonin E.V."/>
            <person name="Smith D.R."/>
        </authorList>
    </citation>
    <scope>NUCLEOTIDE SEQUENCE [LARGE SCALE GENOMIC DNA]</scope>
    <source>
        <strain>ATCC 824 / DSM 792 / JCM 1419 / IAM 19013 / LMG 5710 / NBRC 13948 / NRRL B-527 / VKM B-1787 / 2291 / W</strain>
    </source>
</reference>
<comment type="function">
    <text evidence="1">Part of the high-affinity ATP-driven potassium transport (or Kdp) system, which catalyzes the hydrolysis of ATP coupled with the electrogenic transport of potassium into the cytoplasm. This subunit binds the extracellular potassium ions and delivers the ions to the membrane domain of KdpB through an intramembrane tunnel.</text>
</comment>
<comment type="subunit">
    <text evidence="1">The system is composed of three essential subunits: KdpA, KdpB and KdpC.</text>
</comment>
<comment type="subcellular location">
    <subcellularLocation>
        <location evidence="1">Cell membrane</location>
        <topology evidence="1">Multi-pass membrane protein</topology>
    </subcellularLocation>
</comment>
<comment type="induction">
    <text>By low potassium concentration.</text>
</comment>
<comment type="similarity">
    <text evidence="1">Belongs to the KdpA family.</text>
</comment>
<feature type="chain" id="PRO_0000166491" description="Potassium-transporting ATPase potassium-binding subunit">
    <location>
        <begin position="1"/>
        <end position="557"/>
    </location>
</feature>
<feature type="transmembrane region" description="Helical" evidence="1">
    <location>
        <begin position="1"/>
        <end position="21"/>
    </location>
</feature>
<feature type="transmembrane region" description="Helical" evidence="1">
    <location>
        <begin position="62"/>
        <end position="82"/>
    </location>
</feature>
<feature type="transmembrane region" description="Helical" evidence="1">
    <location>
        <begin position="132"/>
        <end position="152"/>
    </location>
</feature>
<feature type="transmembrane region" description="Helical" evidence="1">
    <location>
        <begin position="176"/>
        <end position="196"/>
    </location>
</feature>
<feature type="transmembrane region" description="Helical" evidence="1">
    <location>
        <begin position="253"/>
        <end position="273"/>
    </location>
</feature>
<feature type="transmembrane region" description="Helical" evidence="1">
    <location>
        <begin position="279"/>
        <end position="299"/>
    </location>
</feature>
<feature type="transmembrane region" description="Helical" evidence="1">
    <location>
        <begin position="371"/>
        <end position="391"/>
    </location>
</feature>
<feature type="transmembrane region" description="Helical" evidence="1">
    <location>
        <begin position="415"/>
        <end position="435"/>
    </location>
</feature>
<feature type="transmembrane region" description="Helical" evidence="1">
    <location>
        <begin position="482"/>
        <end position="502"/>
    </location>
</feature>
<feature type="transmembrane region" description="Helical" evidence="1">
    <location>
        <begin position="528"/>
        <end position="548"/>
    </location>
</feature>
<feature type="sequence conflict" description="In Ref. 1; AAC45477." evidence="2" ref="1">
    <original>G</original>
    <variation>P</variation>
    <location>
        <position position="145"/>
    </location>
</feature>
<feature type="sequence conflict" description="In Ref. 1; AAC45477." evidence="2" ref="1">
    <original>AEKAGNPALSRIGLSQSMGN</original>
    <variation>LRKQEISTLTYRLKSEHGK</variation>
    <location>
        <begin position="300"/>
        <end position="319"/>
    </location>
</feature>
<dbReference type="EMBL" id="U44892">
    <property type="protein sequence ID" value="AAC45477.1"/>
    <property type="molecule type" value="Genomic_DNA"/>
</dbReference>
<dbReference type="EMBL" id="AE001437">
    <property type="protein sequence ID" value="AAK81603.1"/>
    <property type="molecule type" value="Genomic_DNA"/>
</dbReference>
<dbReference type="PIR" id="H97351">
    <property type="entry name" value="H97351"/>
</dbReference>
<dbReference type="PIR" id="T46842">
    <property type="entry name" value="T46842"/>
</dbReference>
<dbReference type="RefSeq" id="NP_350263.1">
    <property type="nucleotide sequence ID" value="NC_003030.1"/>
</dbReference>
<dbReference type="RefSeq" id="WP_010966943.1">
    <property type="nucleotide sequence ID" value="NC_003030.1"/>
</dbReference>
<dbReference type="SMR" id="O32327"/>
<dbReference type="STRING" id="272562.CA_C3682"/>
<dbReference type="GeneID" id="45000180"/>
<dbReference type="KEGG" id="cac:CA_C3682"/>
<dbReference type="PATRIC" id="fig|272562.8.peg.3871"/>
<dbReference type="eggNOG" id="COG2060">
    <property type="taxonomic scope" value="Bacteria"/>
</dbReference>
<dbReference type="HOGENOM" id="CLU_018614_3_0_9"/>
<dbReference type="OrthoDB" id="9763796at2"/>
<dbReference type="BRENDA" id="7.2.2.6">
    <property type="organism ID" value="1452"/>
</dbReference>
<dbReference type="Proteomes" id="UP000000814">
    <property type="component" value="Chromosome"/>
</dbReference>
<dbReference type="GO" id="GO:0005886">
    <property type="term" value="C:plasma membrane"/>
    <property type="evidence" value="ECO:0007669"/>
    <property type="project" value="UniProtKB-SubCell"/>
</dbReference>
<dbReference type="GO" id="GO:0008556">
    <property type="term" value="F:P-type potassium transmembrane transporter activity"/>
    <property type="evidence" value="ECO:0007669"/>
    <property type="project" value="InterPro"/>
</dbReference>
<dbReference type="GO" id="GO:0030955">
    <property type="term" value="F:potassium ion binding"/>
    <property type="evidence" value="ECO:0007669"/>
    <property type="project" value="UniProtKB-UniRule"/>
</dbReference>
<dbReference type="HAMAP" id="MF_00275">
    <property type="entry name" value="KdpA"/>
    <property type="match status" value="1"/>
</dbReference>
<dbReference type="InterPro" id="IPR004623">
    <property type="entry name" value="KdpA"/>
</dbReference>
<dbReference type="NCBIfam" id="TIGR00680">
    <property type="entry name" value="kdpA"/>
    <property type="match status" value="1"/>
</dbReference>
<dbReference type="PANTHER" id="PTHR30607">
    <property type="entry name" value="POTASSIUM-TRANSPORTING ATPASE A CHAIN"/>
    <property type="match status" value="1"/>
</dbReference>
<dbReference type="PANTHER" id="PTHR30607:SF2">
    <property type="entry name" value="POTASSIUM-TRANSPORTING ATPASE POTASSIUM-BINDING SUBUNIT"/>
    <property type="match status" value="1"/>
</dbReference>
<dbReference type="Pfam" id="PF03814">
    <property type="entry name" value="KdpA"/>
    <property type="match status" value="1"/>
</dbReference>
<dbReference type="PIRSF" id="PIRSF001294">
    <property type="entry name" value="K_ATPaseA"/>
    <property type="match status" value="1"/>
</dbReference>
<keyword id="KW-1003">Cell membrane</keyword>
<keyword id="KW-0406">Ion transport</keyword>
<keyword id="KW-0472">Membrane</keyword>
<keyword id="KW-0630">Potassium</keyword>
<keyword id="KW-0633">Potassium transport</keyword>
<keyword id="KW-1185">Reference proteome</keyword>
<keyword id="KW-0812">Transmembrane</keyword>
<keyword id="KW-1133">Transmembrane helix</keyword>
<keyword id="KW-0813">Transport</keyword>
<accession>O32327</accession>
<protein>
    <recommendedName>
        <fullName evidence="1">Potassium-transporting ATPase potassium-binding subunit</fullName>
    </recommendedName>
    <alternativeName>
        <fullName evidence="1">ATP phosphohydrolase [potassium-transporting] A chain</fullName>
    </alternativeName>
    <alternativeName>
        <fullName evidence="1">Potassium-binding and translocating subunit A</fullName>
    </alternativeName>
    <alternativeName>
        <fullName evidence="1">Potassium-translocating ATPase A chain</fullName>
    </alternativeName>
</protein>
<name>KDPA_CLOAB</name>